<proteinExistence type="inferred from homology"/>
<sequence>MSQSRWSIVLIFALFIFGSTGVNAFFNFGHHQQQQQQQQQSYEDQVLNNPCDGYLCPDTLTCVAQQKDCPCPFPKSQLKCVLPDNKFVCISKPATHNEKFRAIYDDPVKGPKAKNKGFRDCGWVSDAYKNH</sequence>
<organism>
    <name type="scientific">Saccharomyces cerevisiae (strain RM11-1a)</name>
    <name type="common">Baker's yeast</name>
    <dbReference type="NCBI Taxonomy" id="285006"/>
    <lineage>
        <taxon>Eukaryota</taxon>
        <taxon>Fungi</taxon>
        <taxon>Dikarya</taxon>
        <taxon>Ascomycota</taxon>
        <taxon>Saccharomycotina</taxon>
        <taxon>Saccharomycetes</taxon>
        <taxon>Saccharomycetales</taxon>
        <taxon>Saccharomycetaceae</taxon>
        <taxon>Saccharomyces</taxon>
    </lineage>
</organism>
<protein>
    <recommendedName>
        <fullName>Long chronological lifespan protein 2</fullName>
    </recommendedName>
</protein>
<accession>B3LT72</accession>
<keyword id="KW-0732">Signal</keyword>
<feature type="signal peptide" evidence="2">
    <location>
        <begin position="1"/>
        <end position="24"/>
    </location>
</feature>
<feature type="chain" id="PRO_0000408633" description="Long chronological lifespan protein 2">
    <location>
        <begin position="25"/>
        <end position="131"/>
    </location>
</feature>
<evidence type="ECO:0000250" key="1"/>
<evidence type="ECO:0000255" key="2"/>
<evidence type="ECO:0000305" key="3"/>
<gene>
    <name type="primary">LCL2</name>
    <name type="ORF">SCRG_05088</name>
</gene>
<reference key="1">
    <citation type="submission" date="2005-03" db="EMBL/GenBank/DDBJ databases">
        <title>Annotation of the Saccharomyces cerevisiae RM11-1a genome.</title>
        <authorList>
            <consortium name="The Broad Institute Genome Sequencing Platform"/>
            <person name="Birren B.W."/>
            <person name="Lander E.S."/>
            <person name="Galagan J.E."/>
            <person name="Nusbaum C."/>
            <person name="Devon K."/>
            <person name="Cuomo C."/>
            <person name="Jaffe D.B."/>
            <person name="Butler J."/>
            <person name="Alvarez P."/>
            <person name="Gnerre S."/>
            <person name="Grabherr M."/>
            <person name="Kleber M."/>
            <person name="Mauceli E.W."/>
            <person name="Brockman W."/>
            <person name="MacCallum I.A."/>
            <person name="Rounsley S."/>
            <person name="Young S.K."/>
            <person name="LaButti K."/>
            <person name="Pushparaj V."/>
            <person name="DeCaprio D."/>
            <person name="Crawford M."/>
            <person name="Koehrsen M."/>
            <person name="Engels R."/>
            <person name="Montgomery P."/>
            <person name="Pearson M."/>
            <person name="Howarth C."/>
            <person name="Larson L."/>
            <person name="Luoma S."/>
            <person name="White J."/>
            <person name="O'Leary S."/>
            <person name="Kodira C.D."/>
            <person name="Zeng Q."/>
            <person name="Yandava C."/>
            <person name="Alvarado L."/>
            <person name="Pratt S."/>
            <person name="Kruglyak L."/>
        </authorList>
    </citation>
    <scope>NUCLEOTIDE SEQUENCE [LARGE SCALE GENOMIC DNA]</scope>
    <source>
        <strain>RM11-1a</strain>
    </source>
</reference>
<name>LCL2_YEAS1</name>
<comment type="function">
    <text evidence="1">Probable component of the endoplasmic reticulum-associated degradation (ERAD) pathway.</text>
</comment>
<comment type="similarity">
    <text evidence="3">Belongs to the LCL2 family.</text>
</comment>
<dbReference type="EMBL" id="CH408054">
    <property type="protein sequence ID" value="EDV09407.1"/>
    <property type="molecule type" value="Genomic_DNA"/>
</dbReference>
<dbReference type="SMR" id="B3LT72"/>
<dbReference type="HOGENOM" id="CLU_142363_1_0_1"/>
<dbReference type="OrthoDB" id="38606at4893"/>
<dbReference type="Proteomes" id="UP000008335">
    <property type="component" value="Unassembled WGS sequence"/>
</dbReference>
<dbReference type="GO" id="GO:0036503">
    <property type="term" value="P:ERAD pathway"/>
    <property type="evidence" value="ECO:0007669"/>
    <property type="project" value="TreeGrafter"/>
</dbReference>
<dbReference type="CDD" id="cd23996">
    <property type="entry name" value="LCL2-like"/>
    <property type="match status" value="1"/>
</dbReference>
<dbReference type="InterPro" id="IPR034543">
    <property type="entry name" value="LCL2"/>
</dbReference>
<dbReference type="PANTHER" id="PTHR38425">
    <property type="entry name" value="LONG CHRONOLOGICAL LIFESPAN PROTEIN 2"/>
    <property type="match status" value="1"/>
</dbReference>
<dbReference type="PANTHER" id="PTHR38425:SF1">
    <property type="entry name" value="LONG CHRONOLOGICAL LIFESPAN PROTEIN 2"/>
    <property type="match status" value="1"/>
</dbReference>